<reference key="1">
    <citation type="online journal article" date="1997" name="Plant Gene Register">
        <title>Nucleotide sequence of S-adenosyl-L-methionine:caffeic acid 3-O-methyltransferase from Clarkia breweri.</title>
        <authorList>
            <person name="Wang J."/>
            <person name="Pichersky E."/>
        </authorList>
        <locator>PGR97-104</locator>
    </citation>
    <scope>NUCLEOTIDE SEQUENCE [MRNA]</scope>
    <scope>PROTEIN SEQUENCE OF 3-13</scope>
</reference>
<reference key="2">
    <citation type="journal article" date="1999" name="Arch. Biochem. Biophys.">
        <title>Identification of specific residues involved in substrate discrimination in two plant O-methyltransferases.</title>
        <authorList>
            <person name="Wang J."/>
            <person name="Pichersky E."/>
        </authorList>
    </citation>
    <scope>MUTAGENESIS OF 132-LEU-CYS-133; 135-MET--GLN-137 AND 166-THR-ALA-167</scope>
</reference>
<dbReference type="EC" id="2.1.1.68"/>
<dbReference type="EMBL" id="AF006009">
    <property type="protein sequence ID" value="AAB71141.1"/>
    <property type="molecule type" value="mRNA"/>
</dbReference>
<dbReference type="SMR" id="O23760"/>
<dbReference type="SABIO-RK" id="O23760"/>
<dbReference type="UniPathway" id="UPA00711"/>
<dbReference type="GO" id="GO:0047763">
    <property type="term" value="F:caffeate O-methyltransferase activity"/>
    <property type="evidence" value="ECO:0007669"/>
    <property type="project" value="UniProtKB-EC"/>
</dbReference>
<dbReference type="GO" id="GO:0046983">
    <property type="term" value="F:protein dimerization activity"/>
    <property type="evidence" value="ECO:0007669"/>
    <property type="project" value="InterPro"/>
</dbReference>
<dbReference type="GO" id="GO:0009809">
    <property type="term" value="P:lignin biosynthetic process"/>
    <property type="evidence" value="ECO:0007669"/>
    <property type="project" value="UniProtKB-KW"/>
</dbReference>
<dbReference type="GO" id="GO:0032259">
    <property type="term" value="P:methylation"/>
    <property type="evidence" value="ECO:0007669"/>
    <property type="project" value="UniProtKB-KW"/>
</dbReference>
<dbReference type="CDD" id="cd02440">
    <property type="entry name" value="AdoMet_MTases"/>
    <property type="match status" value="1"/>
</dbReference>
<dbReference type="FunFam" id="1.10.10.10:FF:000357">
    <property type="entry name" value="Caffeic acid 3-O-methyltransferase"/>
    <property type="match status" value="1"/>
</dbReference>
<dbReference type="FunFam" id="3.40.50.150:FF:000061">
    <property type="entry name" value="Caffeic acid O-methyltransferase"/>
    <property type="match status" value="1"/>
</dbReference>
<dbReference type="Gene3D" id="3.40.50.150">
    <property type="entry name" value="Vaccinia Virus protein VP39"/>
    <property type="match status" value="1"/>
</dbReference>
<dbReference type="Gene3D" id="1.10.10.10">
    <property type="entry name" value="Winged helix-like DNA-binding domain superfamily/Winged helix DNA-binding domain"/>
    <property type="match status" value="1"/>
</dbReference>
<dbReference type="InterPro" id="IPR016461">
    <property type="entry name" value="COMT-like"/>
</dbReference>
<dbReference type="InterPro" id="IPR001077">
    <property type="entry name" value="O_MeTrfase_dom"/>
</dbReference>
<dbReference type="InterPro" id="IPR012967">
    <property type="entry name" value="Plant_O-MeTrfase_dimerisation"/>
</dbReference>
<dbReference type="InterPro" id="IPR029063">
    <property type="entry name" value="SAM-dependent_MTases_sf"/>
</dbReference>
<dbReference type="InterPro" id="IPR036388">
    <property type="entry name" value="WH-like_DNA-bd_sf"/>
</dbReference>
<dbReference type="InterPro" id="IPR036390">
    <property type="entry name" value="WH_DNA-bd_sf"/>
</dbReference>
<dbReference type="PANTHER" id="PTHR11746">
    <property type="entry name" value="O-METHYLTRANSFERASE"/>
    <property type="match status" value="1"/>
</dbReference>
<dbReference type="Pfam" id="PF08100">
    <property type="entry name" value="Dimerisation"/>
    <property type="match status" value="1"/>
</dbReference>
<dbReference type="Pfam" id="PF00891">
    <property type="entry name" value="Methyltransf_2"/>
    <property type="match status" value="1"/>
</dbReference>
<dbReference type="PIRSF" id="PIRSF005739">
    <property type="entry name" value="O-mtase"/>
    <property type="match status" value="1"/>
</dbReference>
<dbReference type="SUPFAM" id="SSF53335">
    <property type="entry name" value="S-adenosyl-L-methionine-dependent methyltransferases"/>
    <property type="match status" value="1"/>
</dbReference>
<dbReference type="SUPFAM" id="SSF46785">
    <property type="entry name" value="Winged helix' DNA-binding domain"/>
    <property type="match status" value="1"/>
</dbReference>
<dbReference type="PROSITE" id="PS51683">
    <property type="entry name" value="SAM_OMT_II"/>
    <property type="match status" value="1"/>
</dbReference>
<accession>O23760</accession>
<organism>
    <name type="scientific">Clarkia breweri</name>
    <name type="common">Fairy fans</name>
    <name type="synonym">Eucharidium breweri</name>
    <dbReference type="NCBI Taxonomy" id="36903"/>
    <lineage>
        <taxon>Eukaryota</taxon>
        <taxon>Viridiplantae</taxon>
        <taxon>Streptophyta</taxon>
        <taxon>Embryophyta</taxon>
        <taxon>Tracheophyta</taxon>
        <taxon>Spermatophyta</taxon>
        <taxon>Magnoliopsida</taxon>
        <taxon>eudicotyledons</taxon>
        <taxon>Gunneridae</taxon>
        <taxon>Pentapetalae</taxon>
        <taxon>rosids</taxon>
        <taxon>malvids</taxon>
        <taxon>Myrtales</taxon>
        <taxon>Onagraceae</taxon>
        <taxon>Onagroideae</taxon>
        <taxon>Onagreae</taxon>
        <taxon>Clarkia</taxon>
    </lineage>
</organism>
<feature type="propeptide" id="PRO_0000248968" evidence="4">
    <location>
        <begin position="1"/>
        <end position="2"/>
    </location>
</feature>
<feature type="chain" id="PRO_0000063199" description="Caffeic acid 3-O-methyltransferase">
    <location>
        <begin position="3"/>
        <end position="370"/>
    </location>
</feature>
<feature type="region of interest" description="Substrate binding" evidence="1">
    <location>
        <begin position="167"/>
        <end position="185"/>
    </location>
</feature>
<feature type="active site" description="Proton acceptor" evidence="2">
    <location>
        <position position="274"/>
    </location>
</feature>
<feature type="binding site" evidence="1">
    <location>
        <begin position="135"/>
        <end position="141"/>
    </location>
    <ligand>
        <name>substrate</name>
    </ligand>
</feature>
<feature type="binding site" evidence="2">
    <location>
        <position position="213"/>
    </location>
    <ligand>
        <name>S-adenosyl-L-methionine</name>
        <dbReference type="ChEBI" id="CHEBI:59789"/>
    </ligand>
</feature>
<feature type="binding site" evidence="2">
    <location>
        <position position="236"/>
    </location>
    <ligand>
        <name>S-adenosyl-L-methionine</name>
        <dbReference type="ChEBI" id="CHEBI:59789"/>
    </ligand>
</feature>
<feature type="binding site" evidence="2">
    <location>
        <position position="256"/>
    </location>
    <ligand>
        <name>S-adenosyl-L-methionine</name>
        <dbReference type="ChEBI" id="CHEBI:59789"/>
    </ligand>
</feature>
<feature type="binding site" evidence="2">
    <location>
        <position position="257"/>
    </location>
    <ligand>
        <name>S-adenosyl-L-methionine</name>
        <dbReference type="ChEBI" id="CHEBI:59789"/>
    </ligand>
</feature>
<feature type="binding site" evidence="2">
    <location>
        <position position="270"/>
    </location>
    <ligand>
        <name>S-adenosyl-L-methionine</name>
        <dbReference type="ChEBI" id="CHEBI:59789"/>
    </ligand>
</feature>
<feature type="mutagenesis site" description="Decreases substrate discrimination. Substrate preference changed; when associated with 135-TAT-137 or 135-TAT-137 and 166-NE-167." evidence="3">
    <original>LC</original>
    <variation>FL</variation>
    <location>
        <begin position="132"/>
        <end position="133"/>
    </location>
</feature>
<feature type="mutagenesis site" description="Decreases substrate discrimination. Substrate preference changed; when associated with 132-FL-133 or 166-NE-167 or 132-FL-133 and 166-NE-167." evidence="3">
    <original>MNQ</original>
    <variation>TAT</variation>
    <location>
        <begin position="135"/>
        <end position="137"/>
    </location>
</feature>
<feature type="mutagenesis site" description="No effect on substrate preference; substrate preference changed; when associated with 135-TAT-137 or 132-FL-133 and 135-TAT-137." evidence="3">
    <original>TA</original>
    <variation>NE</variation>
    <location>
        <begin position="166"/>
        <end position="167"/>
    </location>
</feature>
<proteinExistence type="evidence at protein level"/>
<keyword id="KW-0903">Direct protein sequencing</keyword>
<keyword id="KW-0438">Lignin biosynthesis</keyword>
<keyword id="KW-0489">Methyltransferase</keyword>
<keyword id="KW-0949">S-adenosyl-L-methionine</keyword>
<keyword id="KW-0808">Transferase</keyword>
<sequence length="370" mass="40262">MGSTGNAETQLTPTHVSDEEANLFAMQLASASVLPMVLKAAIELDVLEIMAKSIPHGSGAYISPAEIAAQLPTTNPDAPVMLDRVLRLLASYSVVTCSLRELPDGKVERLYGLAPVCKFLTKNEDGVSLAPLCLMNQDKVLMESWYYLKDAILDGGIPFNKAYGMTAFEYHGTDPRFNKVFNRGMSDHSTITMKKIFEMYTGFEALNTIVDVGGGTGAVLSMIVAKYPSIKGINFDLPHVIEDAPIYPGVEHVGGDMFVSVPKGDAIFMKWICHDWSDEHCLKFLKNCYAALPEHGKVIVAECILPLSPDPSLATKGVIHIDAIMLAHNPGGKERTEKEFEALAIGAGFKGFKVACCAFNTYVMEFLKTA</sequence>
<gene>
    <name type="primary">COMT</name>
</gene>
<comment type="function">
    <text>Catalyzes the conversion of caffeic acid to ferulic acid and of 5-hydroxyferulic acid to sinapic acid. The resulting products may subsequently be converted to the corresponding alcohols that are incorporated into lignins.</text>
</comment>
<comment type="catalytic activity">
    <reaction>
        <text>(E)-caffeate + S-adenosyl-L-methionine = (E)-ferulate + S-adenosyl-L-homocysteine + H(+)</text>
        <dbReference type="Rhea" id="RHEA:20225"/>
        <dbReference type="ChEBI" id="CHEBI:15378"/>
        <dbReference type="ChEBI" id="CHEBI:29749"/>
        <dbReference type="ChEBI" id="CHEBI:57770"/>
        <dbReference type="ChEBI" id="CHEBI:57856"/>
        <dbReference type="ChEBI" id="CHEBI:59789"/>
        <dbReference type="EC" id="2.1.1.68"/>
    </reaction>
</comment>
<comment type="pathway">
    <text>Aromatic compound metabolism; phenylpropanoid biosynthesis.</text>
</comment>
<comment type="subunit">
    <text>Homodimer.</text>
</comment>
<comment type="miscellaneous">
    <text>Caffeic acid 3-O-methyltransferase (COMT) not only has distinct substrate specificity from (iso)eugenol O-methyltransferases (IEMT), a highly homologous enzyme, but it also methylates the hydroxyl group at the meta position rather than at the para position as IEMT does.</text>
</comment>
<comment type="similarity">
    <text evidence="2">Belongs to the class I-like SAM-binding methyltransferase superfamily. Cation-independent O-methyltransferase family. COMT subfamily.</text>
</comment>
<name>COMT1_CLABR</name>
<protein>
    <recommendedName>
        <fullName>Caffeic acid 3-O-methyltransferase</fullName>
        <shortName>CAOMT</shortName>
        <shortName>COMT</shortName>
        <ecNumber>2.1.1.68</ecNumber>
    </recommendedName>
    <alternativeName>
        <fullName>S-adenosysl-L-methionine:caffeic acid 3-O-methyltransferase</fullName>
    </alternativeName>
</protein>
<evidence type="ECO:0000250" key="1"/>
<evidence type="ECO:0000255" key="2">
    <source>
        <dbReference type="PROSITE-ProRule" id="PRU01020"/>
    </source>
</evidence>
<evidence type="ECO:0000269" key="3">
    <source>
    </source>
</evidence>
<evidence type="ECO:0000269" key="4">
    <source ref="1"/>
</evidence>